<evidence type="ECO:0000255" key="1">
    <source>
        <dbReference type="HAMAP-Rule" id="MF_00113"/>
    </source>
</evidence>
<evidence type="ECO:0000305" key="2"/>
<organism>
    <name type="scientific">Legionella pneumophila subsp. pneumophila (strain Philadelphia 1 / ATCC 33152 / DSM 7513)</name>
    <dbReference type="NCBI Taxonomy" id="272624"/>
    <lineage>
        <taxon>Bacteria</taxon>
        <taxon>Pseudomonadati</taxon>
        <taxon>Pseudomonadota</taxon>
        <taxon>Gammaproteobacteria</taxon>
        <taxon>Legionellales</taxon>
        <taxon>Legionellaceae</taxon>
        <taxon>Legionella</taxon>
    </lineage>
</organism>
<proteinExistence type="inferred from homology"/>
<name>QUEA_LEGPH</name>
<accession>Q5ZU04</accession>
<sequence length="337" mass="37835">MNKQDFYFDLPSELIAQYPLANRSDSRLLIYNRQTEEYGHYQFREIADFLQPGDLLVMNDSKVIPARLYGHKATGGKVELLVERITGDFTFLAHIKASKSLKSNDLIYLDAGKRLEVLQRQDDLFLCKACENILDLLNDLGHIPLPPYIAREDESLDKERYQTVYAKCAGSVAAPTAGLHFDDAVLSSIRARGVNIAYVTLHVGAGTFRPVRCERIQDHKMHSEWFTVSPDLCTAVKAAKSMGNRVIAVGTTALRSLESAAMGGELIPCSRDTDIFIYPGYQFKVCDGLITNFHLPESTLVMLVSAFIGHQECMALYQEAIDKRYRFFSYGDASLLL</sequence>
<keyword id="KW-0963">Cytoplasm</keyword>
<keyword id="KW-0671">Queuosine biosynthesis</keyword>
<keyword id="KW-1185">Reference proteome</keyword>
<keyword id="KW-0949">S-adenosyl-L-methionine</keyword>
<keyword id="KW-0808">Transferase</keyword>
<feature type="chain" id="PRO_0000231347" description="S-adenosylmethionine:tRNA ribosyltransferase-isomerase">
    <location>
        <begin position="1"/>
        <end position="337"/>
    </location>
</feature>
<reference key="1">
    <citation type="journal article" date="2004" name="Science">
        <title>The genomic sequence of the accidental pathogen Legionella pneumophila.</title>
        <authorList>
            <person name="Chien M."/>
            <person name="Morozova I."/>
            <person name="Shi S."/>
            <person name="Sheng H."/>
            <person name="Chen J."/>
            <person name="Gomez S.M."/>
            <person name="Asamani G."/>
            <person name="Hill K."/>
            <person name="Nuara J."/>
            <person name="Feder M."/>
            <person name="Rineer J."/>
            <person name="Greenberg J.J."/>
            <person name="Steshenko V."/>
            <person name="Park S.H."/>
            <person name="Zhao B."/>
            <person name="Teplitskaya E."/>
            <person name="Edwards J.R."/>
            <person name="Pampou S."/>
            <person name="Georghiou A."/>
            <person name="Chou I.-C."/>
            <person name="Iannuccilli W."/>
            <person name="Ulz M.E."/>
            <person name="Kim D.H."/>
            <person name="Geringer-Sameth A."/>
            <person name="Goldsberry C."/>
            <person name="Morozov P."/>
            <person name="Fischer S.G."/>
            <person name="Segal G."/>
            <person name="Qu X."/>
            <person name="Rzhetsky A."/>
            <person name="Zhang P."/>
            <person name="Cayanis E."/>
            <person name="De Jong P.J."/>
            <person name="Ju J."/>
            <person name="Kalachikov S."/>
            <person name="Shuman H.A."/>
            <person name="Russo J.J."/>
        </authorList>
    </citation>
    <scope>NUCLEOTIDE SEQUENCE [LARGE SCALE GENOMIC DNA]</scope>
    <source>
        <strain>Philadelphia 1 / ATCC 33152 / DSM 7513</strain>
    </source>
</reference>
<dbReference type="EC" id="2.4.99.17" evidence="1"/>
<dbReference type="EMBL" id="AE017354">
    <property type="protein sequence ID" value="AAU28073.1"/>
    <property type="status" value="ALT_INIT"/>
    <property type="molecule type" value="Genomic_DNA"/>
</dbReference>
<dbReference type="RefSeq" id="WP_015444343.1">
    <property type="nucleotide sequence ID" value="NC_002942.5"/>
</dbReference>
<dbReference type="RefSeq" id="YP_096020.1">
    <property type="nucleotide sequence ID" value="NC_002942.5"/>
</dbReference>
<dbReference type="SMR" id="Q5ZU04"/>
<dbReference type="STRING" id="272624.lpg2004"/>
<dbReference type="PaxDb" id="272624-lpg2004"/>
<dbReference type="GeneID" id="57035997"/>
<dbReference type="KEGG" id="lpn:lpg2004"/>
<dbReference type="PATRIC" id="fig|272624.6.peg.2097"/>
<dbReference type="eggNOG" id="COG0809">
    <property type="taxonomic scope" value="Bacteria"/>
</dbReference>
<dbReference type="HOGENOM" id="CLU_039110_1_0_6"/>
<dbReference type="OrthoDB" id="9805933at2"/>
<dbReference type="UniPathway" id="UPA00392"/>
<dbReference type="Proteomes" id="UP000000609">
    <property type="component" value="Chromosome"/>
</dbReference>
<dbReference type="GO" id="GO:0005737">
    <property type="term" value="C:cytoplasm"/>
    <property type="evidence" value="ECO:0007669"/>
    <property type="project" value="UniProtKB-SubCell"/>
</dbReference>
<dbReference type="GO" id="GO:0051075">
    <property type="term" value="F:S-adenosylmethionine:tRNA ribosyltransferase-isomerase activity"/>
    <property type="evidence" value="ECO:0007669"/>
    <property type="project" value="UniProtKB-EC"/>
</dbReference>
<dbReference type="GO" id="GO:0008616">
    <property type="term" value="P:queuosine biosynthetic process"/>
    <property type="evidence" value="ECO:0007669"/>
    <property type="project" value="UniProtKB-UniRule"/>
</dbReference>
<dbReference type="GO" id="GO:0002099">
    <property type="term" value="P:tRNA wobble guanine modification"/>
    <property type="evidence" value="ECO:0007669"/>
    <property type="project" value="TreeGrafter"/>
</dbReference>
<dbReference type="FunFam" id="3.40.1780.10:FF:000001">
    <property type="entry name" value="S-adenosylmethionine:tRNA ribosyltransferase-isomerase"/>
    <property type="match status" value="1"/>
</dbReference>
<dbReference type="Gene3D" id="2.40.10.240">
    <property type="entry name" value="QueA-like"/>
    <property type="match status" value="1"/>
</dbReference>
<dbReference type="Gene3D" id="3.40.1780.10">
    <property type="entry name" value="QueA-like"/>
    <property type="match status" value="1"/>
</dbReference>
<dbReference type="HAMAP" id="MF_00113">
    <property type="entry name" value="QueA"/>
    <property type="match status" value="1"/>
</dbReference>
<dbReference type="InterPro" id="IPR003699">
    <property type="entry name" value="QueA"/>
</dbReference>
<dbReference type="InterPro" id="IPR042118">
    <property type="entry name" value="QueA_dom1"/>
</dbReference>
<dbReference type="InterPro" id="IPR042119">
    <property type="entry name" value="QueA_dom2"/>
</dbReference>
<dbReference type="InterPro" id="IPR036100">
    <property type="entry name" value="QueA_sf"/>
</dbReference>
<dbReference type="NCBIfam" id="NF001140">
    <property type="entry name" value="PRK00147.1"/>
    <property type="match status" value="1"/>
</dbReference>
<dbReference type="NCBIfam" id="TIGR00113">
    <property type="entry name" value="queA"/>
    <property type="match status" value="1"/>
</dbReference>
<dbReference type="PANTHER" id="PTHR30307">
    <property type="entry name" value="S-ADENOSYLMETHIONINE:TRNA RIBOSYLTRANSFERASE-ISOMERASE"/>
    <property type="match status" value="1"/>
</dbReference>
<dbReference type="PANTHER" id="PTHR30307:SF0">
    <property type="entry name" value="S-ADENOSYLMETHIONINE:TRNA RIBOSYLTRANSFERASE-ISOMERASE"/>
    <property type="match status" value="1"/>
</dbReference>
<dbReference type="Pfam" id="PF02547">
    <property type="entry name" value="Queuosine_synth"/>
    <property type="match status" value="1"/>
</dbReference>
<dbReference type="SUPFAM" id="SSF111337">
    <property type="entry name" value="QueA-like"/>
    <property type="match status" value="1"/>
</dbReference>
<protein>
    <recommendedName>
        <fullName evidence="1">S-adenosylmethionine:tRNA ribosyltransferase-isomerase</fullName>
        <ecNumber evidence="1">2.4.99.17</ecNumber>
    </recommendedName>
    <alternativeName>
        <fullName evidence="1">Queuosine biosynthesis protein QueA</fullName>
    </alternativeName>
</protein>
<gene>
    <name evidence="1" type="primary">queA</name>
    <name type="ordered locus">lpg2004</name>
</gene>
<comment type="function">
    <text evidence="1">Transfers and isomerizes the ribose moiety from AdoMet to the 7-aminomethyl group of 7-deazaguanine (preQ1-tRNA) to give epoxyqueuosine (oQ-tRNA).</text>
</comment>
<comment type="catalytic activity">
    <reaction evidence="1">
        <text>7-aminomethyl-7-carbaguanosine(34) in tRNA + S-adenosyl-L-methionine = epoxyqueuosine(34) in tRNA + adenine + L-methionine + 2 H(+)</text>
        <dbReference type="Rhea" id="RHEA:32155"/>
        <dbReference type="Rhea" id="RHEA-COMP:10342"/>
        <dbReference type="Rhea" id="RHEA-COMP:18582"/>
        <dbReference type="ChEBI" id="CHEBI:15378"/>
        <dbReference type="ChEBI" id="CHEBI:16708"/>
        <dbReference type="ChEBI" id="CHEBI:57844"/>
        <dbReference type="ChEBI" id="CHEBI:59789"/>
        <dbReference type="ChEBI" id="CHEBI:82833"/>
        <dbReference type="ChEBI" id="CHEBI:194443"/>
        <dbReference type="EC" id="2.4.99.17"/>
    </reaction>
</comment>
<comment type="pathway">
    <text evidence="1">tRNA modification; tRNA-queuosine biosynthesis.</text>
</comment>
<comment type="subunit">
    <text evidence="1">Monomer.</text>
</comment>
<comment type="subcellular location">
    <subcellularLocation>
        <location evidence="1">Cytoplasm</location>
    </subcellularLocation>
</comment>
<comment type="similarity">
    <text evidence="1">Belongs to the QueA family.</text>
</comment>
<comment type="sequence caution" evidence="2">
    <conflict type="erroneous initiation">
        <sequence resource="EMBL-CDS" id="AAU28073"/>
    </conflict>
</comment>